<proteinExistence type="inferred from homology"/>
<reference key="1">
    <citation type="journal article" date="1995" name="Gene">
        <title>Analysis of the rpoD gene encoding the principal sigma factor of Pseudomonas putida.</title>
        <authorList>
            <person name="Fujita M."/>
            <person name="Hanaura Y."/>
            <person name="Amemura A."/>
        </authorList>
    </citation>
    <scope>NUCLEOTIDE SEQUENCE [GENOMIC DNA]</scope>
    <source>
        <strain>G1 / ATCC 17453</strain>
    </source>
</reference>
<keyword id="KW-0963">Cytoplasm</keyword>
<keyword id="KW-0238">DNA-binding</keyword>
<keyword id="KW-0731">Sigma factor</keyword>
<keyword id="KW-0804">Transcription</keyword>
<keyword id="KW-0805">Transcription regulation</keyword>
<name>RPOD_PSEPU</name>
<protein>
    <recommendedName>
        <fullName evidence="1">RNA polymerase sigma factor RpoD</fullName>
    </recommendedName>
    <alternativeName>
        <fullName evidence="1">Sigma-70</fullName>
    </alternativeName>
</protein>
<gene>
    <name evidence="1" type="primary">rpoD</name>
</gene>
<feature type="chain" id="PRO_0000093907" description="RNA polymerase sigma factor RpoD">
    <location>
        <begin position="1"/>
        <end position="614"/>
    </location>
</feature>
<feature type="DNA-binding region" description="H-T-H motif" evidence="1">
    <location>
        <begin position="574"/>
        <end position="593"/>
    </location>
</feature>
<feature type="region of interest" description="Disordered" evidence="2">
    <location>
        <begin position="168"/>
        <end position="245"/>
    </location>
</feature>
<feature type="region of interest" description="Sigma-70 factor domain-2" evidence="1">
    <location>
        <begin position="380"/>
        <end position="450"/>
    </location>
</feature>
<feature type="region of interest" description="Sigma-70 factor domain-3" evidence="1">
    <location>
        <begin position="459"/>
        <end position="535"/>
    </location>
</feature>
<feature type="region of interest" description="Sigma-70 factor domain-4" evidence="1">
    <location>
        <begin position="548"/>
        <end position="601"/>
    </location>
</feature>
<feature type="short sequence motif" description="Interaction with polymerase core subunit RpoC">
    <location>
        <begin position="404"/>
        <end position="407"/>
    </location>
</feature>
<feature type="compositionally biased region" description="Acidic residues" evidence="2">
    <location>
        <begin position="193"/>
        <end position="209"/>
    </location>
</feature>
<feature type="compositionally biased region" description="Polar residues" evidence="2">
    <location>
        <begin position="215"/>
        <end position="232"/>
    </location>
</feature>
<comment type="function">
    <text evidence="1">Sigma factors are initiation factors that promote the attachment of RNA polymerase to specific initiation sites and are then released. This sigma factor is the primary sigma factor during exponential growth.</text>
</comment>
<comment type="subunit">
    <text evidence="1">Interacts transiently with the RNA polymerase catalytic core.</text>
</comment>
<comment type="subcellular location">
    <subcellularLocation>
        <location evidence="1">Cytoplasm</location>
    </subcellularLocation>
</comment>
<comment type="similarity">
    <text evidence="1">Belongs to the sigma-70 factor family. RpoD/SigA subfamily.</text>
</comment>
<dbReference type="EMBL" id="D30045">
    <property type="protein sequence ID" value="BAA06281.1"/>
    <property type="molecule type" value="Genomic_DNA"/>
</dbReference>
<dbReference type="PIR" id="JC4551">
    <property type="entry name" value="JC4551"/>
</dbReference>
<dbReference type="SMR" id="P52327"/>
<dbReference type="GO" id="GO:0005737">
    <property type="term" value="C:cytoplasm"/>
    <property type="evidence" value="ECO:0007669"/>
    <property type="project" value="UniProtKB-SubCell"/>
</dbReference>
<dbReference type="GO" id="GO:0003677">
    <property type="term" value="F:DNA binding"/>
    <property type="evidence" value="ECO:0007669"/>
    <property type="project" value="UniProtKB-UniRule"/>
</dbReference>
<dbReference type="GO" id="GO:0016987">
    <property type="term" value="F:sigma factor activity"/>
    <property type="evidence" value="ECO:0007669"/>
    <property type="project" value="UniProtKB-UniRule"/>
</dbReference>
<dbReference type="GO" id="GO:0006352">
    <property type="term" value="P:DNA-templated transcription initiation"/>
    <property type="evidence" value="ECO:0007669"/>
    <property type="project" value="UniProtKB-UniRule"/>
</dbReference>
<dbReference type="CDD" id="cd06171">
    <property type="entry name" value="Sigma70_r4"/>
    <property type="match status" value="1"/>
</dbReference>
<dbReference type="FunFam" id="1.10.220.120:FF:000001">
    <property type="entry name" value="RNA polymerase sigma factor RpoD"/>
    <property type="match status" value="1"/>
</dbReference>
<dbReference type="FunFam" id="1.10.601.10:FF:000002">
    <property type="entry name" value="RNA polymerase sigma factor RpoD"/>
    <property type="match status" value="1"/>
</dbReference>
<dbReference type="FunFam" id="1.10.10.10:FF:000002">
    <property type="entry name" value="RNA polymerase sigma factor SigA"/>
    <property type="match status" value="1"/>
</dbReference>
<dbReference type="FunFam" id="1.10.10.10:FF:000004">
    <property type="entry name" value="RNA polymerase sigma factor SigA"/>
    <property type="match status" value="1"/>
</dbReference>
<dbReference type="Gene3D" id="1.10.601.10">
    <property type="entry name" value="RNA Polymerase Primary Sigma Factor"/>
    <property type="match status" value="1"/>
</dbReference>
<dbReference type="Gene3D" id="1.10.220.120">
    <property type="entry name" value="Sigma-70 factor, region 1.1"/>
    <property type="match status" value="1"/>
</dbReference>
<dbReference type="Gene3D" id="1.10.10.10">
    <property type="entry name" value="Winged helix-like DNA-binding domain superfamily/Winged helix DNA-binding domain"/>
    <property type="match status" value="2"/>
</dbReference>
<dbReference type="HAMAP" id="MF_00963">
    <property type="entry name" value="Sigma70_RpoD_SigA"/>
    <property type="match status" value="1"/>
</dbReference>
<dbReference type="InterPro" id="IPR014284">
    <property type="entry name" value="RNA_pol_sigma-70_dom"/>
</dbReference>
<dbReference type="InterPro" id="IPR000943">
    <property type="entry name" value="RNA_pol_sigma70"/>
</dbReference>
<dbReference type="InterPro" id="IPR009042">
    <property type="entry name" value="RNA_pol_sigma70_r1_2"/>
</dbReference>
<dbReference type="InterPro" id="IPR007627">
    <property type="entry name" value="RNA_pol_sigma70_r2"/>
</dbReference>
<dbReference type="InterPro" id="IPR007624">
    <property type="entry name" value="RNA_pol_sigma70_r3"/>
</dbReference>
<dbReference type="InterPro" id="IPR007630">
    <property type="entry name" value="RNA_pol_sigma70_r4"/>
</dbReference>
<dbReference type="InterPro" id="IPR007631">
    <property type="entry name" value="RNA_pol_sigma_70_non-ess"/>
</dbReference>
<dbReference type="InterPro" id="IPR007127">
    <property type="entry name" value="RNA_pol_sigma_70_r1_1"/>
</dbReference>
<dbReference type="InterPro" id="IPR042189">
    <property type="entry name" value="RNA_pol_sigma_70_r1_1_sf"/>
</dbReference>
<dbReference type="InterPro" id="IPR013325">
    <property type="entry name" value="RNA_pol_sigma_r2"/>
</dbReference>
<dbReference type="InterPro" id="IPR013324">
    <property type="entry name" value="RNA_pol_sigma_r3/r4-like"/>
</dbReference>
<dbReference type="InterPro" id="IPR012760">
    <property type="entry name" value="RNA_pol_sigma_RpoD_C"/>
</dbReference>
<dbReference type="InterPro" id="IPR050239">
    <property type="entry name" value="Sigma-70_RNA_pol_init_factors"/>
</dbReference>
<dbReference type="InterPro" id="IPR028630">
    <property type="entry name" value="Sigma70_RpoD"/>
</dbReference>
<dbReference type="InterPro" id="IPR036388">
    <property type="entry name" value="WH-like_DNA-bd_sf"/>
</dbReference>
<dbReference type="NCBIfam" id="NF004208">
    <property type="entry name" value="PRK05658.1"/>
    <property type="match status" value="1"/>
</dbReference>
<dbReference type="NCBIfam" id="TIGR02393">
    <property type="entry name" value="RpoD_Cterm"/>
    <property type="match status" value="1"/>
</dbReference>
<dbReference type="NCBIfam" id="TIGR02937">
    <property type="entry name" value="sigma70-ECF"/>
    <property type="match status" value="1"/>
</dbReference>
<dbReference type="PANTHER" id="PTHR30603">
    <property type="entry name" value="RNA POLYMERASE SIGMA FACTOR RPO"/>
    <property type="match status" value="1"/>
</dbReference>
<dbReference type="PANTHER" id="PTHR30603:SF60">
    <property type="entry name" value="RNA POLYMERASE SIGMA FACTOR RPOD"/>
    <property type="match status" value="1"/>
</dbReference>
<dbReference type="Pfam" id="PF04546">
    <property type="entry name" value="Sigma70_ner"/>
    <property type="match status" value="1"/>
</dbReference>
<dbReference type="Pfam" id="PF03979">
    <property type="entry name" value="Sigma70_r1_1"/>
    <property type="match status" value="1"/>
</dbReference>
<dbReference type="Pfam" id="PF00140">
    <property type="entry name" value="Sigma70_r1_2"/>
    <property type="match status" value="1"/>
</dbReference>
<dbReference type="Pfam" id="PF04542">
    <property type="entry name" value="Sigma70_r2"/>
    <property type="match status" value="1"/>
</dbReference>
<dbReference type="Pfam" id="PF04539">
    <property type="entry name" value="Sigma70_r3"/>
    <property type="match status" value="1"/>
</dbReference>
<dbReference type="Pfam" id="PF04545">
    <property type="entry name" value="Sigma70_r4"/>
    <property type="match status" value="1"/>
</dbReference>
<dbReference type="PRINTS" id="PR00046">
    <property type="entry name" value="SIGMA70FCT"/>
</dbReference>
<dbReference type="SUPFAM" id="SSF88946">
    <property type="entry name" value="Sigma2 domain of RNA polymerase sigma factors"/>
    <property type="match status" value="1"/>
</dbReference>
<dbReference type="SUPFAM" id="SSF88659">
    <property type="entry name" value="Sigma3 and sigma4 domains of RNA polymerase sigma factors"/>
    <property type="match status" value="2"/>
</dbReference>
<dbReference type="PROSITE" id="PS00715">
    <property type="entry name" value="SIGMA70_1"/>
    <property type="match status" value="1"/>
</dbReference>
<dbReference type="PROSITE" id="PS00716">
    <property type="entry name" value="SIGMA70_2"/>
    <property type="match status" value="1"/>
</dbReference>
<organism>
    <name type="scientific">Pseudomonas putida</name>
    <name type="common">Arthrobacter siderocapsulatus</name>
    <dbReference type="NCBI Taxonomy" id="303"/>
    <lineage>
        <taxon>Bacteria</taxon>
        <taxon>Pseudomonadati</taxon>
        <taxon>Pseudomonadota</taxon>
        <taxon>Gammaproteobacteria</taxon>
        <taxon>Pseudomonadales</taxon>
        <taxon>Pseudomonadaceae</taxon>
        <taxon>Pseudomonas</taxon>
    </lineage>
</organism>
<sequence length="614" mass="69726">MSGKAQQQSRIKELITRGREQGYLTYAEVNDHLPEDISDPEQVEDIIRMINDMGINVFESAPDADALLLAEADTDEAAAEEAAAALAAVETDIRRTTDPVRMYMREMGTVELLTREGEIEIAKRIEEGIREVMGAIAHFPGTVDYILGEYDRVNRGCRLSDVLSGYIDPDDNIAAPTEEVPIPGTKAAAAKEEADDDEEESEGGDDEEEPKAALTRSSQPSVSVRYPSSFSDHQGPEEKRSYPQGKRRALQALADLFMPIKLVPKQFEVLVERVRDALNRLRQQERAIMQLCVRDARMPRADFLRMFPSNETDQTWSGDLAKRNTKWAAALGEKDAAIVACQQKLIDLETETGLTVAEIKEINRRMSIGEAKARRAKKEMVEANLRLVISIAKKYTNRGLQFLDLIQEGNIGLMKAVDKFEYRRGYKFSTYATWWIRQAITRSIADQARTIRIPVHMIETINKLNRISRQMLQEMGREPTPEELGERMEMPEDKIRKVLKIAKEPISMETPIGDDEDSHLGDFIEDSTMQSPIYVATVESLKEATRDVLSGLTAREAKVLRMRFGIDMNTDHTLEEVGKQFDVTRERIRQIEAKAWRKLRHPTRSEHLRSFLDE</sequence>
<accession>P52327</accession>
<evidence type="ECO:0000255" key="1">
    <source>
        <dbReference type="HAMAP-Rule" id="MF_00963"/>
    </source>
</evidence>
<evidence type="ECO:0000256" key="2">
    <source>
        <dbReference type="SAM" id="MobiDB-lite"/>
    </source>
</evidence>